<name>METK_AERPE</name>
<evidence type="ECO:0000250" key="1"/>
<evidence type="ECO:0000255" key="2"/>
<evidence type="ECO:0000305" key="3"/>
<gene>
    <name type="primary">mat</name>
    <name type="ordered locus">APE_1596</name>
</gene>
<reference key="1">
    <citation type="journal article" date="1999" name="DNA Res.">
        <title>Complete genome sequence of an aerobic hyper-thermophilic crenarchaeon, Aeropyrum pernix K1.</title>
        <authorList>
            <person name="Kawarabayasi Y."/>
            <person name="Hino Y."/>
            <person name="Horikawa H."/>
            <person name="Yamazaki S."/>
            <person name="Haikawa Y."/>
            <person name="Jin-no K."/>
            <person name="Takahashi M."/>
            <person name="Sekine M."/>
            <person name="Baba S."/>
            <person name="Ankai A."/>
            <person name="Kosugi H."/>
            <person name="Hosoyama A."/>
            <person name="Fukui S."/>
            <person name="Nagai Y."/>
            <person name="Nishijima K."/>
            <person name="Nakazawa H."/>
            <person name="Takamiya M."/>
            <person name="Masuda S."/>
            <person name="Funahashi T."/>
            <person name="Tanaka T."/>
            <person name="Kudoh Y."/>
            <person name="Yamazaki J."/>
            <person name="Kushida N."/>
            <person name="Oguchi A."/>
            <person name="Aoki K."/>
            <person name="Kubota K."/>
            <person name="Nakamura Y."/>
            <person name="Nomura N."/>
            <person name="Sako Y."/>
            <person name="Kikuchi H."/>
        </authorList>
    </citation>
    <scope>NUCLEOTIDE SEQUENCE [LARGE SCALE GENOMIC DNA]</scope>
    <source>
        <strain>ATCC 700893 / DSM 11879 / JCM 9820 / NBRC 100138 / K1</strain>
    </source>
</reference>
<keyword id="KW-0067">ATP-binding</keyword>
<keyword id="KW-0460">Magnesium</keyword>
<keyword id="KW-0547">Nucleotide-binding</keyword>
<keyword id="KW-0554">One-carbon metabolism</keyword>
<keyword id="KW-1185">Reference proteome</keyword>
<keyword id="KW-0808">Transferase</keyword>
<proteinExistence type="inferred from homology"/>
<accession>Q9YBK2</accession>
<feature type="chain" id="PRO_0000150024" description="S-adenosylmethionine synthase">
    <location>
        <begin position="1"/>
        <end position="406"/>
    </location>
</feature>
<feature type="binding site" evidence="2">
    <location>
        <begin position="140"/>
        <end position="145"/>
    </location>
    <ligand>
        <name>ATP</name>
        <dbReference type="ChEBI" id="CHEBI:30616"/>
    </ligand>
</feature>
<comment type="function">
    <text evidence="1">Catalyzes the formation of S-adenosylmethionine from methionine and ATP.</text>
</comment>
<comment type="catalytic activity">
    <reaction>
        <text>L-methionine + ATP + H2O = S-adenosyl-L-methionine + phosphate + diphosphate</text>
        <dbReference type="Rhea" id="RHEA:21080"/>
        <dbReference type="ChEBI" id="CHEBI:15377"/>
        <dbReference type="ChEBI" id="CHEBI:30616"/>
        <dbReference type="ChEBI" id="CHEBI:33019"/>
        <dbReference type="ChEBI" id="CHEBI:43474"/>
        <dbReference type="ChEBI" id="CHEBI:57844"/>
        <dbReference type="ChEBI" id="CHEBI:59789"/>
        <dbReference type="EC" id="2.5.1.6"/>
    </reaction>
</comment>
<comment type="cofactor">
    <cofactor evidence="1">
        <name>Mg(2+)</name>
        <dbReference type="ChEBI" id="CHEBI:18420"/>
    </cofactor>
</comment>
<comment type="pathway">
    <text>Amino-acid biosynthesis; S-adenosyl-L-methionine biosynthesis; S-adenosyl-L-methionine from L-methionine: step 1/1.</text>
</comment>
<comment type="similarity">
    <text evidence="3">Belongs to the AdoMet synthase 2 family.</text>
</comment>
<organism>
    <name type="scientific">Aeropyrum pernix (strain ATCC 700893 / DSM 11879 / JCM 9820 / NBRC 100138 / K1)</name>
    <dbReference type="NCBI Taxonomy" id="272557"/>
    <lineage>
        <taxon>Archaea</taxon>
        <taxon>Thermoproteota</taxon>
        <taxon>Thermoprotei</taxon>
        <taxon>Desulfurococcales</taxon>
        <taxon>Desulfurococcaceae</taxon>
        <taxon>Aeropyrum</taxon>
    </lineage>
</organism>
<sequence length="406" mass="44235">MARRIVVESYPYPRVEDLQVELVERKGLGHPDTICDAAAEAVSRELSKYYLERFGKILHHNVDKVLLVGGQAAPRLGGGEVLQPIYILVSGRVTTEVRTGGGVESVPVGPIILRAVKNYIRENFRFLDPEEHVIVDYRVGRGSVDLVGIFEAEDKVPLANDTSIGSGHAPLSTLERLVLETERILNSRETKERLPAVGEDVKVMGVRDGKSITLTVAMAVVSSQVGSVSDYLAVKEEAESLILDLASRIAPDYDVRVNINTGDIPEKKILYLTVTGTSAEHGDDGATGRGNRVNGLITPMRPMSMEAAAGKNPVNHVGKIYNVVANEMAALIHREVKGVEEVYVKLVSQIGKPIDRPRIVDVKVRMEGGREVTADAKREIEAIANSVLDGITGYTEKLVRGDITVY</sequence>
<protein>
    <recommendedName>
        <fullName>S-adenosylmethionine synthase</fullName>
        <shortName>AdoMet synthase</shortName>
        <ecNumber>2.5.1.6</ecNumber>
    </recommendedName>
    <alternativeName>
        <fullName>Methionine adenosyltransferase</fullName>
    </alternativeName>
</protein>
<dbReference type="EC" id="2.5.1.6"/>
<dbReference type="EMBL" id="BA000002">
    <property type="protein sequence ID" value="BAA80596.1"/>
    <property type="molecule type" value="Genomic_DNA"/>
</dbReference>
<dbReference type="PIR" id="G72538">
    <property type="entry name" value="G72538"/>
</dbReference>
<dbReference type="RefSeq" id="WP_010866477.1">
    <property type="nucleotide sequence ID" value="NC_000854.2"/>
</dbReference>
<dbReference type="SMR" id="Q9YBK2"/>
<dbReference type="STRING" id="272557.APE_1596"/>
<dbReference type="EnsemblBacteria" id="BAA80596">
    <property type="protein sequence ID" value="BAA80596"/>
    <property type="gene ID" value="APE_1596"/>
</dbReference>
<dbReference type="GeneID" id="1446121"/>
<dbReference type="KEGG" id="ape:APE_1596"/>
<dbReference type="PATRIC" id="fig|272557.25.peg.1080"/>
<dbReference type="eggNOG" id="arCOG01678">
    <property type="taxonomic scope" value="Archaea"/>
</dbReference>
<dbReference type="UniPathway" id="UPA00315">
    <property type="reaction ID" value="UER00080"/>
</dbReference>
<dbReference type="Proteomes" id="UP000002518">
    <property type="component" value="Chromosome"/>
</dbReference>
<dbReference type="GO" id="GO:0005524">
    <property type="term" value="F:ATP binding"/>
    <property type="evidence" value="ECO:0007669"/>
    <property type="project" value="UniProtKB-UniRule"/>
</dbReference>
<dbReference type="GO" id="GO:0000287">
    <property type="term" value="F:magnesium ion binding"/>
    <property type="evidence" value="ECO:0007669"/>
    <property type="project" value="UniProtKB-UniRule"/>
</dbReference>
<dbReference type="GO" id="GO:0004478">
    <property type="term" value="F:methionine adenosyltransferase activity"/>
    <property type="evidence" value="ECO:0007669"/>
    <property type="project" value="UniProtKB-UniRule"/>
</dbReference>
<dbReference type="GO" id="GO:0006730">
    <property type="term" value="P:one-carbon metabolic process"/>
    <property type="evidence" value="ECO:0007669"/>
    <property type="project" value="UniProtKB-KW"/>
</dbReference>
<dbReference type="GO" id="GO:0006556">
    <property type="term" value="P:S-adenosylmethionine biosynthetic process"/>
    <property type="evidence" value="ECO:0007669"/>
    <property type="project" value="UniProtKB-UniRule"/>
</dbReference>
<dbReference type="Gene3D" id="3.30.300.10">
    <property type="match status" value="1"/>
</dbReference>
<dbReference type="Gene3D" id="3.30.300.280">
    <property type="entry name" value="S-adenosylmethionine synthetase, C-terminal domain"/>
    <property type="match status" value="2"/>
</dbReference>
<dbReference type="HAMAP" id="MF_00136">
    <property type="entry name" value="S_AdoMet_synth2"/>
    <property type="match status" value="1"/>
</dbReference>
<dbReference type="InterPro" id="IPR027790">
    <property type="entry name" value="AdoMet_synthase_2_family"/>
</dbReference>
<dbReference type="InterPro" id="IPR042544">
    <property type="entry name" value="AdoMet_synthase_3"/>
</dbReference>
<dbReference type="InterPro" id="IPR002795">
    <property type="entry name" value="S-AdoMet_synthetase_arc"/>
</dbReference>
<dbReference type="NCBIfam" id="NF003365">
    <property type="entry name" value="PRK04439.1-4"/>
    <property type="match status" value="1"/>
</dbReference>
<dbReference type="NCBIfam" id="NF003366">
    <property type="entry name" value="PRK04439.1-5"/>
    <property type="match status" value="1"/>
</dbReference>
<dbReference type="PANTHER" id="PTHR36697">
    <property type="entry name" value="S-ADENOSYLMETHIONINE SYNTHASE"/>
    <property type="match status" value="1"/>
</dbReference>
<dbReference type="PANTHER" id="PTHR36697:SF1">
    <property type="entry name" value="S-ADENOSYLMETHIONINE SYNTHASE"/>
    <property type="match status" value="1"/>
</dbReference>
<dbReference type="Pfam" id="PF01941">
    <property type="entry name" value="AdoMet_Synthase"/>
    <property type="match status" value="1"/>
</dbReference>